<proteinExistence type="inferred from homology"/>
<evidence type="ECO:0000255" key="1">
    <source>
        <dbReference type="HAMAP-Rule" id="MF_00503"/>
    </source>
</evidence>
<evidence type="ECO:0000305" key="2"/>
<gene>
    <name evidence="1" type="primary">rplI</name>
    <name type="ordered locus">GAU_1203</name>
</gene>
<sequence length="147" mass="16303">MEVILRNAVDKLGHPGDIVSVSPGYARNFLIPRGFAYEATQGNRKRIAFEKSRLEALENERIAAAQAIADKLAEVSVTFAARVGEEGKLFGSVTTADIAHQLEAQGFKIEKRQIELNEPIKTLGVYRVGVRLHADVHPEIKVWVIKQ</sequence>
<accession>C1A7N5</accession>
<feature type="chain" id="PRO_1000206550" description="Large ribosomal subunit protein bL9">
    <location>
        <begin position="1"/>
        <end position="147"/>
    </location>
</feature>
<comment type="function">
    <text evidence="1">Binds to the 23S rRNA.</text>
</comment>
<comment type="similarity">
    <text evidence="1">Belongs to the bacterial ribosomal protein bL9 family.</text>
</comment>
<keyword id="KW-1185">Reference proteome</keyword>
<keyword id="KW-0687">Ribonucleoprotein</keyword>
<keyword id="KW-0689">Ribosomal protein</keyword>
<keyword id="KW-0694">RNA-binding</keyword>
<keyword id="KW-0699">rRNA-binding</keyword>
<organism>
    <name type="scientific">Gemmatimonas aurantiaca (strain DSM 14586 / JCM 11422 / NBRC 100505 / T-27)</name>
    <dbReference type="NCBI Taxonomy" id="379066"/>
    <lineage>
        <taxon>Bacteria</taxon>
        <taxon>Pseudomonadati</taxon>
        <taxon>Gemmatimonadota</taxon>
        <taxon>Gemmatimonadia</taxon>
        <taxon>Gemmatimonadales</taxon>
        <taxon>Gemmatimonadaceae</taxon>
        <taxon>Gemmatimonas</taxon>
    </lineage>
</organism>
<reference key="1">
    <citation type="submission" date="2006-03" db="EMBL/GenBank/DDBJ databases">
        <title>Complete genome sequence of Gemmatimonas aurantiaca T-27 that represents a novel phylum Gemmatimonadetes.</title>
        <authorList>
            <person name="Takasaki K."/>
            <person name="Ichikawa N."/>
            <person name="Miura H."/>
            <person name="Matsushita S."/>
            <person name="Watanabe Y."/>
            <person name="Oguchi A."/>
            <person name="Ankai A."/>
            <person name="Yashiro I."/>
            <person name="Takahashi M."/>
            <person name="Terui Y."/>
            <person name="Fukui S."/>
            <person name="Yokoyama H."/>
            <person name="Tanikawa S."/>
            <person name="Hanada S."/>
            <person name="Kamagata Y."/>
            <person name="Fujita N."/>
        </authorList>
    </citation>
    <scope>NUCLEOTIDE SEQUENCE [LARGE SCALE GENOMIC DNA]</scope>
    <source>
        <strain>DSM 14586 / JCM 11422 / NBRC 100505 / T-27</strain>
    </source>
</reference>
<dbReference type="EMBL" id="AP009153">
    <property type="protein sequence ID" value="BAH38245.1"/>
    <property type="molecule type" value="Genomic_DNA"/>
</dbReference>
<dbReference type="RefSeq" id="WP_012682692.1">
    <property type="nucleotide sequence ID" value="NC_012489.1"/>
</dbReference>
<dbReference type="SMR" id="C1A7N5"/>
<dbReference type="STRING" id="379066.GAU_1203"/>
<dbReference type="KEGG" id="gau:GAU_1203"/>
<dbReference type="eggNOG" id="COG0359">
    <property type="taxonomic scope" value="Bacteria"/>
</dbReference>
<dbReference type="HOGENOM" id="CLU_078938_3_0_0"/>
<dbReference type="OrthoDB" id="9788336at2"/>
<dbReference type="Proteomes" id="UP000002209">
    <property type="component" value="Chromosome"/>
</dbReference>
<dbReference type="GO" id="GO:1990904">
    <property type="term" value="C:ribonucleoprotein complex"/>
    <property type="evidence" value="ECO:0007669"/>
    <property type="project" value="UniProtKB-KW"/>
</dbReference>
<dbReference type="GO" id="GO:0005840">
    <property type="term" value="C:ribosome"/>
    <property type="evidence" value="ECO:0007669"/>
    <property type="project" value="UniProtKB-KW"/>
</dbReference>
<dbReference type="GO" id="GO:0019843">
    <property type="term" value="F:rRNA binding"/>
    <property type="evidence" value="ECO:0007669"/>
    <property type="project" value="UniProtKB-UniRule"/>
</dbReference>
<dbReference type="GO" id="GO:0003735">
    <property type="term" value="F:structural constituent of ribosome"/>
    <property type="evidence" value="ECO:0007669"/>
    <property type="project" value="InterPro"/>
</dbReference>
<dbReference type="GO" id="GO:0006412">
    <property type="term" value="P:translation"/>
    <property type="evidence" value="ECO:0007669"/>
    <property type="project" value="UniProtKB-UniRule"/>
</dbReference>
<dbReference type="FunFam" id="3.10.430.100:FF:000006">
    <property type="entry name" value="50S ribosomal protein L9"/>
    <property type="match status" value="1"/>
</dbReference>
<dbReference type="Gene3D" id="3.10.430.100">
    <property type="entry name" value="Ribosomal protein L9, C-terminal domain"/>
    <property type="match status" value="1"/>
</dbReference>
<dbReference type="Gene3D" id="3.40.5.10">
    <property type="entry name" value="Ribosomal protein L9, N-terminal domain"/>
    <property type="match status" value="1"/>
</dbReference>
<dbReference type="HAMAP" id="MF_00503">
    <property type="entry name" value="Ribosomal_bL9"/>
    <property type="match status" value="1"/>
</dbReference>
<dbReference type="InterPro" id="IPR000244">
    <property type="entry name" value="Ribosomal_bL9"/>
</dbReference>
<dbReference type="InterPro" id="IPR009027">
    <property type="entry name" value="Ribosomal_bL9/RNase_H1_N"/>
</dbReference>
<dbReference type="InterPro" id="IPR020594">
    <property type="entry name" value="Ribosomal_bL9_bac/chp"/>
</dbReference>
<dbReference type="InterPro" id="IPR020069">
    <property type="entry name" value="Ribosomal_bL9_C"/>
</dbReference>
<dbReference type="InterPro" id="IPR036791">
    <property type="entry name" value="Ribosomal_bL9_C_sf"/>
</dbReference>
<dbReference type="InterPro" id="IPR020070">
    <property type="entry name" value="Ribosomal_bL9_N"/>
</dbReference>
<dbReference type="InterPro" id="IPR036935">
    <property type="entry name" value="Ribosomal_bL9_N_sf"/>
</dbReference>
<dbReference type="NCBIfam" id="TIGR00158">
    <property type="entry name" value="L9"/>
    <property type="match status" value="1"/>
</dbReference>
<dbReference type="PANTHER" id="PTHR21368">
    <property type="entry name" value="50S RIBOSOMAL PROTEIN L9"/>
    <property type="match status" value="1"/>
</dbReference>
<dbReference type="Pfam" id="PF03948">
    <property type="entry name" value="Ribosomal_L9_C"/>
    <property type="match status" value="1"/>
</dbReference>
<dbReference type="Pfam" id="PF01281">
    <property type="entry name" value="Ribosomal_L9_N"/>
    <property type="match status" value="1"/>
</dbReference>
<dbReference type="SUPFAM" id="SSF55658">
    <property type="entry name" value="L9 N-domain-like"/>
    <property type="match status" value="1"/>
</dbReference>
<dbReference type="SUPFAM" id="SSF55653">
    <property type="entry name" value="Ribosomal protein L9 C-domain"/>
    <property type="match status" value="1"/>
</dbReference>
<dbReference type="PROSITE" id="PS00651">
    <property type="entry name" value="RIBOSOMAL_L9"/>
    <property type="match status" value="1"/>
</dbReference>
<name>RL9_GEMAT</name>
<protein>
    <recommendedName>
        <fullName evidence="1">Large ribosomal subunit protein bL9</fullName>
    </recommendedName>
    <alternativeName>
        <fullName evidence="2">50S ribosomal protein L9</fullName>
    </alternativeName>
</protein>